<dbReference type="EC" id="6.1.1.10" evidence="1"/>
<dbReference type="EMBL" id="CP000886">
    <property type="protein sequence ID" value="ABX66290.1"/>
    <property type="status" value="ALT_INIT"/>
    <property type="molecule type" value="Genomic_DNA"/>
</dbReference>
<dbReference type="RefSeq" id="WP_000195334.1">
    <property type="nucleotide sequence ID" value="NC_010102.1"/>
</dbReference>
<dbReference type="SMR" id="A9N7I2"/>
<dbReference type="KEGG" id="spq:SPAB_00866"/>
<dbReference type="PATRIC" id="fig|1016998.12.peg.812"/>
<dbReference type="HOGENOM" id="CLU_009710_7_0_6"/>
<dbReference type="BioCyc" id="SENT1016998:SPAB_RS03570-MONOMER"/>
<dbReference type="Proteomes" id="UP000008556">
    <property type="component" value="Chromosome"/>
</dbReference>
<dbReference type="GO" id="GO:0005829">
    <property type="term" value="C:cytosol"/>
    <property type="evidence" value="ECO:0007669"/>
    <property type="project" value="TreeGrafter"/>
</dbReference>
<dbReference type="GO" id="GO:0005524">
    <property type="term" value="F:ATP binding"/>
    <property type="evidence" value="ECO:0007669"/>
    <property type="project" value="UniProtKB-UniRule"/>
</dbReference>
<dbReference type="GO" id="GO:0046872">
    <property type="term" value="F:metal ion binding"/>
    <property type="evidence" value="ECO:0007669"/>
    <property type="project" value="UniProtKB-KW"/>
</dbReference>
<dbReference type="GO" id="GO:0004825">
    <property type="term" value="F:methionine-tRNA ligase activity"/>
    <property type="evidence" value="ECO:0007669"/>
    <property type="project" value="UniProtKB-UniRule"/>
</dbReference>
<dbReference type="GO" id="GO:0000049">
    <property type="term" value="F:tRNA binding"/>
    <property type="evidence" value="ECO:0007669"/>
    <property type="project" value="UniProtKB-KW"/>
</dbReference>
<dbReference type="GO" id="GO:0006431">
    <property type="term" value="P:methionyl-tRNA aminoacylation"/>
    <property type="evidence" value="ECO:0007669"/>
    <property type="project" value="UniProtKB-UniRule"/>
</dbReference>
<dbReference type="CDD" id="cd07957">
    <property type="entry name" value="Anticodon_Ia_Met"/>
    <property type="match status" value="1"/>
</dbReference>
<dbReference type="CDD" id="cd00814">
    <property type="entry name" value="MetRS_core"/>
    <property type="match status" value="1"/>
</dbReference>
<dbReference type="CDD" id="cd02800">
    <property type="entry name" value="tRNA_bind_EcMetRS_like"/>
    <property type="match status" value="1"/>
</dbReference>
<dbReference type="FunFam" id="1.10.730.10:FF:000005">
    <property type="entry name" value="Methionine--tRNA ligase"/>
    <property type="match status" value="1"/>
</dbReference>
<dbReference type="FunFam" id="2.20.28.20:FF:000001">
    <property type="entry name" value="Methionine--tRNA ligase"/>
    <property type="match status" value="1"/>
</dbReference>
<dbReference type="FunFam" id="2.40.50.140:FF:000042">
    <property type="entry name" value="Methionine--tRNA ligase"/>
    <property type="match status" value="1"/>
</dbReference>
<dbReference type="Gene3D" id="3.40.50.620">
    <property type="entry name" value="HUPs"/>
    <property type="match status" value="1"/>
</dbReference>
<dbReference type="Gene3D" id="1.10.730.10">
    <property type="entry name" value="Isoleucyl-tRNA Synthetase, Domain 1"/>
    <property type="match status" value="1"/>
</dbReference>
<dbReference type="Gene3D" id="2.20.28.20">
    <property type="entry name" value="Methionyl-tRNA synthetase, Zn-domain"/>
    <property type="match status" value="1"/>
</dbReference>
<dbReference type="Gene3D" id="2.40.50.140">
    <property type="entry name" value="Nucleic acid-binding proteins"/>
    <property type="match status" value="1"/>
</dbReference>
<dbReference type="HAMAP" id="MF_00098">
    <property type="entry name" value="Met_tRNA_synth_type1"/>
    <property type="match status" value="1"/>
</dbReference>
<dbReference type="InterPro" id="IPR001412">
    <property type="entry name" value="aa-tRNA-synth_I_CS"/>
</dbReference>
<dbReference type="InterPro" id="IPR041872">
    <property type="entry name" value="Anticodon_Met"/>
</dbReference>
<dbReference type="InterPro" id="IPR004495">
    <property type="entry name" value="Met-tRNA-synth_bsu_C"/>
</dbReference>
<dbReference type="InterPro" id="IPR023458">
    <property type="entry name" value="Met-tRNA_ligase_1"/>
</dbReference>
<dbReference type="InterPro" id="IPR014758">
    <property type="entry name" value="Met-tRNA_synth"/>
</dbReference>
<dbReference type="InterPro" id="IPR015413">
    <property type="entry name" value="Methionyl/Leucyl_tRNA_Synth"/>
</dbReference>
<dbReference type="InterPro" id="IPR033911">
    <property type="entry name" value="MetRS_core"/>
</dbReference>
<dbReference type="InterPro" id="IPR029038">
    <property type="entry name" value="MetRS_Zn"/>
</dbReference>
<dbReference type="InterPro" id="IPR012340">
    <property type="entry name" value="NA-bd_OB-fold"/>
</dbReference>
<dbReference type="InterPro" id="IPR014729">
    <property type="entry name" value="Rossmann-like_a/b/a_fold"/>
</dbReference>
<dbReference type="InterPro" id="IPR002547">
    <property type="entry name" value="tRNA-bd_dom"/>
</dbReference>
<dbReference type="InterPro" id="IPR009080">
    <property type="entry name" value="tRNAsynth_Ia_anticodon-bd"/>
</dbReference>
<dbReference type="NCBIfam" id="TIGR00398">
    <property type="entry name" value="metG"/>
    <property type="match status" value="1"/>
</dbReference>
<dbReference type="NCBIfam" id="TIGR00399">
    <property type="entry name" value="metG_C_term"/>
    <property type="match status" value="1"/>
</dbReference>
<dbReference type="NCBIfam" id="NF001100">
    <property type="entry name" value="PRK00133.1"/>
    <property type="match status" value="1"/>
</dbReference>
<dbReference type="PANTHER" id="PTHR45765">
    <property type="entry name" value="METHIONINE--TRNA LIGASE"/>
    <property type="match status" value="1"/>
</dbReference>
<dbReference type="PANTHER" id="PTHR45765:SF1">
    <property type="entry name" value="METHIONINE--TRNA LIGASE, CYTOPLASMIC"/>
    <property type="match status" value="1"/>
</dbReference>
<dbReference type="Pfam" id="PF19303">
    <property type="entry name" value="Anticodon_3"/>
    <property type="match status" value="1"/>
</dbReference>
<dbReference type="Pfam" id="PF09334">
    <property type="entry name" value="tRNA-synt_1g"/>
    <property type="match status" value="1"/>
</dbReference>
<dbReference type="Pfam" id="PF01588">
    <property type="entry name" value="tRNA_bind"/>
    <property type="match status" value="1"/>
</dbReference>
<dbReference type="PRINTS" id="PR01041">
    <property type="entry name" value="TRNASYNTHMET"/>
</dbReference>
<dbReference type="SUPFAM" id="SSF47323">
    <property type="entry name" value="Anticodon-binding domain of a subclass of class I aminoacyl-tRNA synthetases"/>
    <property type="match status" value="1"/>
</dbReference>
<dbReference type="SUPFAM" id="SSF57770">
    <property type="entry name" value="Methionyl-tRNA synthetase (MetRS), Zn-domain"/>
    <property type="match status" value="1"/>
</dbReference>
<dbReference type="SUPFAM" id="SSF50249">
    <property type="entry name" value="Nucleic acid-binding proteins"/>
    <property type="match status" value="1"/>
</dbReference>
<dbReference type="SUPFAM" id="SSF52374">
    <property type="entry name" value="Nucleotidylyl transferase"/>
    <property type="match status" value="1"/>
</dbReference>
<dbReference type="PROSITE" id="PS00178">
    <property type="entry name" value="AA_TRNA_LIGASE_I"/>
    <property type="match status" value="1"/>
</dbReference>
<dbReference type="PROSITE" id="PS50886">
    <property type="entry name" value="TRBD"/>
    <property type="match status" value="1"/>
</dbReference>
<organism>
    <name type="scientific">Salmonella paratyphi B (strain ATCC BAA-1250 / SPB7)</name>
    <dbReference type="NCBI Taxonomy" id="1016998"/>
    <lineage>
        <taxon>Bacteria</taxon>
        <taxon>Pseudomonadati</taxon>
        <taxon>Pseudomonadota</taxon>
        <taxon>Gammaproteobacteria</taxon>
        <taxon>Enterobacterales</taxon>
        <taxon>Enterobacteriaceae</taxon>
        <taxon>Salmonella</taxon>
    </lineage>
</organism>
<sequence>MTQVAKKILVTCALPYANGSIHLGHMLEHIQADVWVRYQRMRGHEVNFICADDAHGTPIMLKAQQLGITPEQMIGEMSQEHQTDFAGFNISYDNYHSTHSDENRELSELIYTRLKENGFIKNRTISQLYDPEKGMFLPDRFVKGTCPKCKSADQYGDNCEVCGATYSPTELIEPKSVVSGATPVMRDSEHFFFDLPSFSEMLQAWTRSGALQEQVANKMQEWFESGLQQWDISRDAPYFGFEIPNAPGKYFYVWLDAPIGYMGSFKNLCDKRGDTTSFDEYWKKDSDAELYHFIGKDIVYFHSLFWPAMLEGSHFRKPTNLFVHGYVTVNGAKMSKSRGTFIKASTWLKHFDADSLRYYYTAKLSSRIDDIDLNLEDFVQRVNADIVNKVVNLASRNAGFINKRFDGVLAAELADPQLYKTFTDAAAVIGEAWESREFGKAIREIMALADVANRYVDEQAPWVVAKQEGRDADLQAICSMGINLFRVLMTYLKPVLPTLSERVEAFLNSELNWDAIEQPLLGHKVNTFKALYNRIDMKQVEALVEASKEEVKAAAAPVTGPLADFPIQETITFDDFAKIDLRVALIENAEFVDGSDKLLRLTLDLGGEKRNVFSGIRSAYPDPQALIGRQTVMVANLAPRKMRFGVSEGMVMAAGPGGKDIFLLSPDDGAKPGQQVK</sequence>
<reference key="1">
    <citation type="submission" date="2007-11" db="EMBL/GenBank/DDBJ databases">
        <authorList>
            <consortium name="The Salmonella enterica serovar Paratyphi B Genome Sequencing Project"/>
            <person name="McClelland M."/>
            <person name="Sanderson E.K."/>
            <person name="Porwollik S."/>
            <person name="Spieth J."/>
            <person name="Clifton W.S."/>
            <person name="Fulton R."/>
            <person name="Cordes M."/>
            <person name="Wollam A."/>
            <person name="Shah N."/>
            <person name="Pepin K."/>
            <person name="Bhonagiri V."/>
            <person name="Nash W."/>
            <person name="Johnson M."/>
            <person name="Thiruvilangam P."/>
            <person name="Wilson R."/>
        </authorList>
    </citation>
    <scope>NUCLEOTIDE SEQUENCE [LARGE SCALE GENOMIC DNA]</scope>
    <source>
        <strain>ATCC BAA-1250 / SPB7</strain>
    </source>
</reference>
<protein>
    <recommendedName>
        <fullName evidence="1">Methionine--tRNA ligase</fullName>
        <ecNumber evidence="1">6.1.1.10</ecNumber>
    </recommendedName>
    <alternativeName>
        <fullName evidence="1">Methionyl-tRNA synthetase</fullName>
        <shortName evidence="1">MetRS</shortName>
    </alternativeName>
</protein>
<comment type="function">
    <text evidence="1">Is required not only for elongation of protein synthesis but also for the initiation of all mRNA translation through initiator tRNA(fMet) aminoacylation.</text>
</comment>
<comment type="catalytic activity">
    <reaction evidence="1">
        <text>tRNA(Met) + L-methionine + ATP = L-methionyl-tRNA(Met) + AMP + diphosphate</text>
        <dbReference type="Rhea" id="RHEA:13481"/>
        <dbReference type="Rhea" id="RHEA-COMP:9667"/>
        <dbReference type="Rhea" id="RHEA-COMP:9698"/>
        <dbReference type="ChEBI" id="CHEBI:30616"/>
        <dbReference type="ChEBI" id="CHEBI:33019"/>
        <dbReference type="ChEBI" id="CHEBI:57844"/>
        <dbReference type="ChEBI" id="CHEBI:78442"/>
        <dbReference type="ChEBI" id="CHEBI:78530"/>
        <dbReference type="ChEBI" id="CHEBI:456215"/>
        <dbReference type="EC" id="6.1.1.10"/>
    </reaction>
</comment>
<comment type="cofactor">
    <cofactor evidence="1">
        <name>Zn(2+)</name>
        <dbReference type="ChEBI" id="CHEBI:29105"/>
    </cofactor>
    <text evidence="1">Binds 1 zinc ion per subunit.</text>
</comment>
<comment type="subunit">
    <text evidence="1">Homodimer.</text>
</comment>
<comment type="subcellular location">
    <subcellularLocation>
        <location evidence="1">Cytoplasm</location>
    </subcellularLocation>
</comment>
<comment type="similarity">
    <text evidence="1">Belongs to the class-I aminoacyl-tRNA synthetase family. MetG type 1 subfamily.</text>
</comment>
<comment type="sequence caution" evidence="2">
    <conflict type="erroneous initiation">
        <sequence resource="EMBL-CDS" id="ABX66290"/>
    </conflict>
</comment>
<evidence type="ECO:0000255" key="1">
    <source>
        <dbReference type="HAMAP-Rule" id="MF_00098"/>
    </source>
</evidence>
<evidence type="ECO:0000305" key="2"/>
<feature type="chain" id="PRO_0000331900" description="Methionine--tRNA ligase">
    <location>
        <begin position="1"/>
        <end position="677"/>
    </location>
</feature>
<feature type="domain" description="tRNA-binding" evidence="1">
    <location>
        <begin position="575"/>
        <end position="677"/>
    </location>
</feature>
<feature type="short sequence motif" description="'HIGH' region">
    <location>
        <begin position="15"/>
        <end position="25"/>
    </location>
</feature>
<feature type="short sequence motif" description="'KMSKS' region">
    <location>
        <begin position="333"/>
        <end position="337"/>
    </location>
</feature>
<feature type="binding site" evidence="1">
    <location>
        <position position="146"/>
    </location>
    <ligand>
        <name>Zn(2+)</name>
        <dbReference type="ChEBI" id="CHEBI:29105"/>
    </ligand>
</feature>
<feature type="binding site" evidence="1">
    <location>
        <position position="149"/>
    </location>
    <ligand>
        <name>Zn(2+)</name>
        <dbReference type="ChEBI" id="CHEBI:29105"/>
    </ligand>
</feature>
<feature type="binding site" evidence="1">
    <location>
        <position position="159"/>
    </location>
    <ligand>
        <name>Zn(2+)</name>
        <dbReference type="ChEBI" id="CHEBI:29105"/>
    </ligand>
</feature>
<feature type="binding site" evidence="1">
    <location>
        <position position="162"/>
    </location>
    <ligand>
        <name>Zn(2+)</name>
        <dbReference type="ChEBI" id="CHEBI:29105"/>
    </ligand>
</feature>
<feature type="binding site" evidence="1">
    <location>
        <position position="336"/>
    </location>
    <ligand>
        <name>ATP</name>
        <dbReference type="ChEBI" id="CHEBI:30616"/>
    </ligand>
</feature>
<name>SYM_SALPB</name>
<accession>A9N7I2</accession>
<gene>
    <name evidence="1" type="primary">metG</name>
    <name type="ordered locus">SPAB_00866</name>
</gene>
<proteinExistence type="inferred from homology"/>
<keyword id="KW-0030">Aminoacyl-tRNA synthetase</keyword>
<keyword id="KW-0067">ATP-binding</keyword>
<keyword id="KW-0963">Cytoplasm</keyword>
<keyword id="KW-0436">Ligase</keyword>
<keyword id="KW-0479">Metal-binding</keyword>
<keyword id="KW-0547">Nucleotide-binding</keyword>
<keyword id="KW-0648">Protein biosynthesis</keyword>
<keyword id="KW-0694">RNA-binding</keyword>
<keyword id="KW-0820">tRNA-binding</keyword>
<keyword id="KW-0862">Zinc</keyword>